<protein>
    <recommendedName>
        <fullName evidence="1">Succinylglutamate desuccinylase</fullName>
        <ecNumber evidence="1">3.5.1.96</ecNumber>
    </recommendedName>
</protein>
<dbReference type="EC" id="3.5.1.96" evidence="1"/>
<dbReference type="EMBL" id="CP000270">
    <property type="protein sequence ID" value="ABE30058.1"/>
    <property type="molecule type" value="Genomic_DNA"/>
</dbReference>
<dbReference type="SMR" id="Q141D1"/>
<dbReference type="STRING" id="266265.Bxe_A2918"/>
<dbReference type="KEGG" id="bxb:DR64_600"/>
<dbReference type="KEGG" id="bxe:Bxe_A2918"/>
<dbReference type="PATRIC" id="fig|266265.5.peg.1571"/>
<dbReference type="eggNOG" id="COG2988">
    <property type="taxonomic scope" value="Bacteria"/>
</dbReference>
<dbReference type="OrthoDB" id="5290473at2"/>
<dbReference type="UniPathway" id="UPA00185">
    <property type="reaction ID" value="UER00283"/>
</dbReference>
<dbReference type="Proteomes" id="UP000001817">
    <property type="component" value="Chromosome 1"/>
</dbReference>
<dbReference type="GO" id="GO:0016788">
    <property type="term" value="F:hydrolase activity, acting on ester bonds"/>
    <property type="evidence" value="ECO:0007669"/>
    <property type="project" value="UniProtKB-UniRule"/>
</dbReference>
<dbReference type="GO" id="GO:0009017">
    <property type="term" value="F:succinylglutamate desuccinylase activity"/>
    <property type="evidence" value="ECO:0007669"/>
    <property type="project" value="UniProtKB-EC"/>
</dbReference>
<dbReference type="GO" id="GO:0008270">
    <property type="term" value="F:zinc ion binding"/>
    <property type="evidence" value="ECO:0007669"/>
    <property type="project" value="UniProtKB-UniRule"/>
</dbReference>
<dbReference type="GO" id="GO:0019544">
    <property type="term" value="P:arginine catabolic process to glutamate"/>
    <property type="evidence" value="ECO:0007669"/>
    <property type="project" value="UniProtKB-UniRule"/>
</dbReference>
<dbReference type="GO" id="GO:0019545">
    <property type="term" value="P:arginine catabolic process to succinate"/>
    <property type="evidence" value="ECO:0007669"/>
    <property type="project" value="UniProtKB-UniRule"/>
</dbReference>
<dbReference type="CDD" id="cd03855">
    <property type="entry name" value="M14_ASTE"/>
    <property type="match status" value="1"/>
</dbReference>
<dbReference type="Gene3D" id="3.40.630.10">
    <property type="entry name" value="Zn peptidases"/>
    <property type="match status" value="1"/>
</dbReference>
<dbReference type="HAMAP" id="MF_00767">
    <property type="entry name" value="Arg_catab_AstE"/>
    <property type="match status" value="1"/>
</dbReference>
<dbReference type="InterPro" id="IPR050178">
    <property type="entry name" value="AspA/AstE_fam"/>
</dbReference>
<dbReference type="InterPro" id="IPR055438">
    <property type="entry name" value="AstE_AspA_cat"/>
</dbReference>
<dbReference type="InterPro" id="IPR007036">
    <property type="entry name" value="Aste_AspA_hybrid_dom"/>
</dbReference>
<dbReference type="InterPro" id="IPR016681">
    <property type="entry name" value="SuccinylGlu_desuccinylase"/>
</dbReference>
<dbReference type="NCBIfam" id="TIGR03242">
    <property type="entry name" value="arg_catab_astE"/>
    <property type="match status" value="1"/>
</dbReference>
<dbReference type="NCBIfam" id="NF003706">
    <property type="entry name" value="PRK05324.1"/>
    <property type="match status" value="1"/>
</dbReference>
<dbReference type="PANTHER" id="PTHR15162">
    <property type="entry name" value="ASPARTOACYLASE"/>
    <property type="match status" value="1"/>
</dbReference>
<dbReference type="PANTHER" id="PTHR15162:SF7">
    <property type="entry name" value="SUCCINYLGLUTAMATE DESUCCINYLASE"/>
    <property type="match status" value="1"/>
</dbReference>
<dbReference type="Pfam" id="PF24827">
    <property type="entry name" value="AstE_AspA_cat"/>
    <property type="match status" value="1"/>
</dbReference>
<dbReference type="Pfam" id="PF04952">
    <property type="entry name" value="AstE_AspA_hybrid"/>
    <property type="match status" value="1"/>
</dbReference>
<dbReference type="PIRSF" id="PIRSF017020">
    <property type="entry name" value="AstE"/>
    <property type="match status" value="1"/>
</dbReference>
<dbReference type="SUPFAM" id="SSF53187">
    <property type="entry name" value="Zn-dependent exopeptidases"/>
    <property type="match status" value="1"/>
</dbReference>
<comment type="function">
    <text evidence="1">Transforms N(2)-succinylglutamate into succinate and glutamate.</text>
</comment>
<comment type="catalytic activity">
    <reaction evidence="1">
        <text>N-succinyl-L-glutamate + H2O = L-glutamate + succinate</text>
        <dbReference type="Rhea" id="RHEA:15169"/>
        <dbReference type="ChEBI" id="CHEBI:15377"/>
        <dbReference type="ChEBI" id="CHEBI:29985"/>
        <dbReference type="ChEBI" id="CHEBI:30031"/>
        <dbReference type="ChEBI" id="CHEBI:58763"/>
        <dbReference type="EC" id="3.5.1.96"/>
    </reaction>
</comment>
<comment type="cofactor">
    <cofactor evidence="1">
        <name>Zn(2+)</name>
        <dbReference type="ChEBI" id="CHEBI:29105"/>
    </cofactor>
    <text evidence="1">Binds 1 zinc ion per subunit.</text>
</comment>
<comment type="pathway">
    <text evidence="1">Amino-acid degradation; L-arginine degradation via AST pathway; L-glutamate and succinate from L-arginine: step 5/5.</text>
</comment>
<comment type="similarity">
    <text evidence="1">Belongs to the AspA/AstE family. Succinylglutamate desuccinylase subfamily.</text>
</comment>
<keyword id="KW-0056">Arginine metabolism</keyword>
<keyword id="KW-0378">Hydrolase</keyword>
<keyword id="KW-0479">Metal-binding</keyword>
<keyword id="KW-1185">Reference proteome</keyword>
<keyword id="KW-0862">Zinc</keyword>
<feature type="chain" id="PRO_0000257710" description="Succinylglutamate desuccinylase">
    <location>
        <begin position="1"/>
        <end position="342"/>
    </location>
</feature>
<feature type="active site" evidence="1">
    <location>
        <position position="222"/>
    </location>
</feature>
<feature type="binding site" evidence="1">
    <location>
        <position position="63"/>
    </location>
    <ligand>
        <name>Zn(2+)</name>
        <dbReference type="ChEBI" id="CHEBI:29105"/>
    </ligand>
</feature>
<feature type="binding site" evidence="1">
    <location>
        <position position="66"/>
    </location>
    <ligand>
        <name>Zn(2+)</name>
        <dbReference type="ChEBI" id="CHEBI:29105"/>
    </ligand>
</feature>
<feature type="binding site" evidence="1">
    <location>
        <position position="159"/>
    </location>
    <ligand>
        <name>Zn(2+)</name>
        <dbReference type="ChEBI" id="CHEBI:29105"/>
    </ligand>
</feature>
<evidence type="ECO:0000255" key="1">
    <source>
        <dbReference type="HAMAP-Rule" id="MF_00767"/>
    </source>
</evidence>
<name>ASTE_PARXL</name>
<reference key="1">
    <citation type="journal article" date="2006" name="Proc. Natl. Acad. Sci. U.S.A.">
        <title>Burkholderia xenovorans LB400 harbors a multi-replicon, 9.73-Mbp genome shaped for versatility.</title>
        <authorList>
            <person name="Chain P.S.G."/>
            <person name="Denef V.J."/>
            <person name="Konstantinidis K.T."/>
            <person name="Vergez L.M."/>
            <person name="Agullo L."/>
            <person name="Reyes V.L."/>
            <person name="Hauser L."/>
            <person name="Cordova M."/>
            <person name="Gomez L."/>
            <person name="Gonzalez M."/>
            <person name="Land M."/>
            <person name="Lao V."/>
            <person name="Larimer F."/>
            <person name="LiPuma J.J."/>
            <person name="Mahenthiralingam E."/>
            <person name="Malfatti S.A."/>
            <person name="Marx C.J."/>
            <person name="Parnell J.J."/>
            <person name="Ramette A."/>
            <person name="Richardson P."/>
            <person name="Seeger M."/>
            <person name="Smith D."/>
            <person name="Spilker T."/>
            <person name="Sul W.J."/>
            <person name="Tsoi T.V."/>
            <person name="Ulrich L.E."/>
            <person name="Zhulin I.B."/>
            <person name="Tiedje J.M."/>
        </authorList>
    </citation>
    <scope>NUCLEOTIDE SEQUENCE [LARGE SCALE GENOMIC DNA]</scope>
    <source>
        <strain>LB400</strain>
    </source>
</reference>
<proteinExistence type="inferred from homology"/>
<sequence>MPVSLLDDFLAYTLAGTRPAASEAQGTCAGGVRWSWLDDGVLLMEPAVQEEGMRSVLVSAGVHGDETAPIELLAFLVRDIAHGTAALTGRLLVILGNVDAMRDACRYRDDDLNRLFSGRHLQLPQSHEAPRAAALERAATRFFAAAPDNPGARWHIDMHTAIRASAFEQFALLPHTGKPFSRAMFEWLGEARISAVLLHTTRGNTYSHFTAQACGALACTLELGKVRPFGQNDLTRFAGADHAVRHLLAGMRGEVRAPMPRAFTVIDQITRQSEAFELLVAPDVANFTPFAKDTVLARDGDYRYVVRHDEERLVFPNATVKPGLRAGLMVIETTQDTLSKLV</sequence>
<organism>
    <name type="scientific">Paraburkholderia xenovorans (strain LB400)</name>
    <dbReference type="NCBI Taxonomy" id="266265"/>
    <lineage>
        <taxon>Bacteria</taxon>
        <taxon>Pseudomonadati</taxon>
        <taxon>Pseudomonadota</taxon>
        <taxon>Betaproteobacteria</taxon>
        <taxon>Burkholderiales</taxon>
        <taxon>Burkholderiaceae</taxon>
        <taxon>Paraburkholderia</taxon>
    </lineage>
</organism>
<gene>
    <name evidence="1" type="primary">astE</name>
    <name type="ordered locus">Bxeno_A1520</name>
    <name type="ORF">Bxe_A2918</name>
</gene>
<accession>Q141D1</accession>